<sequence>MPAAALLDDFLAFTLAGDAPAEQDGACAGGAVRWQWLGDGLLAFEPAAADAAARASVLVSAGVHGDETAPIELLSMLVRDLAAGALPLACRLLVVLGNVPAMRAGERYLDDDLNRLFSGRHAQVPASREAPRAAQLEAAAAAFFAAAPAGSARWHIDMHTAIRASVFEQFALLPHTGTPPTRAMIEWLGDARIAAVLLHTAKGNTYSHFTAEHCGALACTLELGKVRPFGQNDLARFAPADRAVRKLVSGGRAEVDAGGGHPSLPRVFTVIDQITKQSDALELFVAADVANFTAFARGTVLAQDGDYRYTVTHDEERIVFPNPTVKPGLRAGLLVIDTTRETIAALV</sequence>
<dbReference type="EC" id="3.5.1.96" evidence="1"/>
<dbReference type="EMBL" id="AM747720">
    <property type="protein sequence ID" value="CAR51367.1"/>
    <property type="molecule type" value="Genomic_DNA"/>
</dbReference>
<dbReference type="RefSeq" id="WP_012492443.1">
    <property type="nucleotide sequence ID" value="NC_011000.1"/>
</dbReference>
<dbReference type="SMR" id="B4ED00"/>
<dbReference type="KEGG" id="bcj:BCAL1064"/>
<dbReference type="eggNOG" id="COG2988">
    <property type="taxonomic scope" value="Bacteria"/>
</dbReference>
<dbReference type="HOGENOM" id="CLU_071608_0_0_4"/>
<dbReference type="UniPathway" id="UPA00185">
    <property type="reaction ID" value="UER00283"/>
</dbReference>
<dbReference type="Proteomes" id="UP000001035">
    <property type="component" value="Chromosome 1"/>
</dbReference>
<dbReference type="GO" id="GO:0016788">
    <property type="term" value="F:hydrolase activity, acting on ester bonds"/>
    <property type="evidence" value="ECO:0007669"/>
    <property type="project" value="UniProtKB-UniRule"/>
</dbReference>
<dbReference type="GO" id="GO:0009017">
    <property type="term" value="F:succinylglutamate desuccinylase activity"/>
    <property type="evidence" value="ECO:0007669"/>
    <property type="project" value="UniProtKB-EC"/>
</dbReference>
<dbReference type="GO" id="GO:0008270">
    <property type="term" value="F:zinc ion binding"/>
    <property type="evidence" value="ECO:0007669"/>
    <property type="project" value="UniProtKB-UniRule"/>
</dbReference>
<dbReference type="GO" id="GO:0019544">
    <property type="term" value="P:arginine catabolic process to glutamate"/>
    <property type="evidence" value="ECO:0007669"/>
    <property type="project" value="UniProtKB-UniRule"/>
</dbReference>
<dbReference type="GO" id="GO:0019545">
    <property type="term" value="P:arginine catabolic process to succinate"/>
    <property type="evidence" value="ECO:0007669"/>
    <property type="project" value="UniProtKB-UniRule"/>
</dbReference>
<dbReference type="CDD" id="cd03855">
    <property type="entry name" value="M14_ASTE"/>
    <property type="match status" value="1"/>
</dbReference>
<dbReference type="Gene3D" id="3.40.630.10">
    <property type="entry name" value="Zn peptidases"/>
    <property type="match status" value="1"/>
</dbReference>
<dbReference type="HAMAP" id="MF_00767">
    <property type="entry name" value="Arg_catab_AstE"/>
    <property type="match status" value="1"/>
</dbReference>
<dbReference type="InterPro" id="IPR050178">
    <property type="entry name" value="AspA/AstE_fam"/>
</dbReference>
<dbReference type="InterPro" id="IPR055438">
    <property type="entry name" value="AstE_AspA_cat"/>
</dbReference>
<dbReference type="InterPro" id="IPR007036">
    <property type="entry name" value="Aste_AspA_hybrid_dom"/>
</dbReference>
<dbReference type="InterPro" id="IPR016681">
    <property type="entry name" value="SuccinylGlu_desuccinylase"/>
</dbReference>
<dbReference type="NCBIfam" id="TIGR03242">
    <property type="entry name" value="arg_catab_astE"/>
    <property type="match status" value="1"/>
</dbReference>
<dbReference type="NCBIfam" id="NF003706">
    <property type="entry name" value="PRK05324.1"/>
    <property type="match status" value="1"/>
</dbReference>
<dbReference type="PANTHER" id="PTHR15162">
    <property type="entry name" value="ASPARTOACYLASE"/>
    <property type="match status" value="1"/>
</dbReference>
<dbReference type="PANTHER" id="PTHR15162:SF7">
    <property type="entry name" value="SUCCINYLGLUTAMATE DESUCCINYLASE"/>
    <property type="match status" value="1"/>
</dbReference>
<dbReference type="Pfam" id="PF24827">
    <property type="entry name" value="AstE_AspA_cat"/>
    <property type="match status" value="1"/>
</dbReference>
<dbReference type="Pfam" id="PF04952">
    <property type="entry name" value="AstE_AspA_hybrid"/>
    <property type="match status" value="1"/>
</dbReference>
<dbReference type="PIRSF" id="PIRSF017020">
    <property type="entry name" value="AstE"/>
    <property type="match status" value="1"/>
</dbReference>
<dbReference type="SUPFAM" id="SSF53187">
    <property type="entry name" value="Zn-dependent exopeptidases"/>
    <property type="match status" value="1"/>
</dbReference>
<reference key="1">
    <citation type="journal article" date="2009" name="J. Bacteriol.">
        <title>The genome of Burkholderia cenocepacia J2315, an epidemic pathogen of cystic fibrosis patients.</title>
        <authorList>
            <person name="Holden M.T."/>
            <person name="Seth-Smith H.M."/>
            <person name="Crossman L.C."/>
            <person name="Sebaihia M."/>
            <person name="Bentley S.D."/>
            <person name="Cerdeno-Tarraga A.M."/>
            <person name="Thomson N.R."/>
            <person name="Bason N."/>
            <person name="Quail M.A."/>
            <person name="Sharp S."/>
            <person name="Cherevach I."/>
            <person name="Churcher C."/>
            <person name="Goodhead I."/>
            <person name="Hauser H."/>
            <person name="Holroyd N."/>
            <person name="Mungall K."/>
            <person name="Scott P."/>
            <person name="Walker D."/>
            <person name="White B."/>
            <person name="Rose H."/>
            <person name="Iversen P."/>
            <person name="Mil-Homens D."/>
            <person name="Rocha E.P."/>
            <person name="Fialho A.M."/>
            <person name="Baldwin A."/>
            <person name="Dowson C."/>
            <person name="Barrell B.G."/>
            <person name="Govan J.R."/>
            <person name="Vandamme P."/>
            <person name="Hart C.A."/>
            <person name="Mahenthiralingam E."/>
            <person name="Parkhill J."/>
        </authorList>
    </citation>
    <scope>NUCLEOTIDE SEQUENCE [LARGE SCALE GENOMIC DNA]</scope>
    <source>
        <strain>ATCC BAA-245 / DSM 16553 / LMG 16656 / NCTC 13227 / J2315 / CF5610</strain>
    </source>
</reference>
<feature type="chain" id="PRO_1000133625" description="Succinylglutamate desuccinylase">
    <location>
        <begin position="1"/>
        <end position="347"/>
    </location>
</feature>
<feature type="active site" evidence="1">
    <location>
        <position position="222"/>
    </location>
</feature>
<feature type="binding site" evidence="1">
    <location>
        <position position="64"/>
    </location>
    <ligand>
        <name>Zn(2+)</name>
        <dbReference type="ChEBI" id="CHEBI:29105"/>
    </ligand>
</feature>
<feature type="binding site" evidence="1">
    <location>
        <position position="67"/>
    </location>
    <ligand>
        <name>Zn(2+)</name>
        <dbReference type="ChEBI" id="CHEBI:29105"/>
    </ligand>
</feature>
<feature type="binding site" evidence="1">
    <location>
        <position position="159"/>
    </location>
    <ligand>
        <name>Zn(2+)</name>
        <dbReference type="ChEBI" id="CHEBI:29105"/>
    </ligand>
</feature>
<comment type="function">
    <text evidence="1">Transforms N(2)-succinylglutamate into succinate and glutamate.</text>
</comment>
<comment type="catalytic activity">
    <reaction evidence="1">
        <text>N-succinyl-L-glutamate + H2O = L-glutamate + succinate</text>
        <dbReference type="Rhea" id="RHEA:15169"/>
        <dbReference type="ChEBI" id="CHEBI:15377"/>
        <dbReference type="ChEBI" id="CHEBI:29985"/>
        <dbReference type="ChEBI" id="CHEBI:30031"/>
        <dbReference type="ChEBI" id="CHEBI:58763"/>
        <dbReference type="EC" id="3.5.1.96"/>
    </reaction>
</comment>
<comment type="cofactor">
    <cofactor evidence="1">
        <name>Zn(2+)</name>
        <dbReference type="ChEBI" id="CHEBI:29105"/>
    </cofactor>
    <text evidence="1">Binds 1 zinc ion per subunit.</text>
</comment>
<comment type="pathway">
    <text evidence="1">Amino-acid degradation; L-arginine degradation via AST pathway; L-glutamate and succinate from L-arginine: step 5/5.</text>
</comment>
<comment type="similarity">
    <text evidence="1">Belongs to the AspA/AstE family. Succinylglutamate desuccinylase subfamily.</text>
</comment>
<organism>
    <name type="scientific">Burkholderia cenocepacia (strain ATCC BAA-245 / DSM 16553 / LMG 16656 / NCTC 13227 / J2315 / CF5610)</name>
    <name type="common">Burkholderia cepacia (strain J2315)</name>
    <dbReference type="NCBI Taxonomy" id="216591"/>
    <lineage>
        <taxon>Bacteria</taxon>
        <taxon>Pseudomonadati</taxon>
        <taxon>Pseudomonadota</taxon>
        <taxon>Betaproteobacteria</taxon>
        <taxon>Burkholderiales</taxon>
        <taxon>Burkholderiaceae</taxon>
        <taxon>Burkholderia</taxon>
        <taxon>Burkholderia cepacia complex</taxon>
    </lineage>
</organism>
<proteinExistence type="inferred from homology"/>
<keyword id="KW-0056">Arginine metabolism</keyword>
<keyword id="KW-0378">Hydrolase</keyword>
<keyword id="KW-0479">Metal-binding</keyword>
<keyword id="KW-0862">Zinc</keyword>
<name>ASTE_BURCJ</name>
<protein>
    <recommendedName>
        <fullName evidence="1">Succinylglutamate desuccinylase</fullName>
        <ecNumber evidence="1">3.5.1.96</ecNumber>
    </recommendedName>
</protein>
<evidence type="ECO:0000255" key="1">
    <source>
        <dbReference type="HAMAP-Rule" id="MF_00767"/>
    </source>
</evidence>
<gene>
    <name evidence="1" type="primary">astE</name>
    <name type="ordered locus">BceJ2315_10480</name>
    <name type="ORF">BCAL1064</name>
</gene>
<accession>B4ED00</accession>